<feature type="chain" id="PRO_0000162012" description="Uncharacterized RNA methyltransferase mlr7480">
    <location>
        <begin position="1"/>
        <end position="412"/>
    </location>
</feature>
<feature type="active site" description="Nucleophile" evidence="2">
    <location>
        <position position="364"/>
    </location>
</feature>
<feature type="binding site" evidence="1">
    <location>
        <position position="62"/>
    </location>
    <ligand>
        <name>[4Fe-4S] cluster</name>
        <dbReference type="ChEBI" id="CHEBI:49883"/>
    </ligand>
</feature>
<feature type="binding site" evidence="1">
    <location>
        <position position="68"/>
    </location>
    <ligand>
        <name>[4Fe-4S] cluster</name>
        <dbReference type="ChEBI" id="CHEBI:49883"/>
    </ligand>
</feature>
<feature type="binding site" evidence="1">
    <location>
        <position position="71"/>
    </location>
    <ligand>
        <name>[4Fe-4S] cluster</name>
        <dbReference type="ChEBI" id="CHEBI:49883"/>
    </ligand>
</feature>
<feature type="binding site" evidence="1">
    <location>
        <position position="143"/>
    </location>
    <ligand>
        <name>[4Fe-4S] cluster</name>
        <dbReference type="ChEBI" id="CHEBI:49883"/>
    </ligand>
</feature>
<feature type="binding site" evidence="2">
    <location>
        <position position="243"/>
    </location>
    <ligand>
        <name>S-adenosyl-L-methionine</name>
        <dbReference type="ChEBI" id="CHEBI:59789"/>
    </ligand>
</feature>
<feature type="binding site" evidence="2">
    <location>
        <position position="270"/>
    </location>
    <ligand>
        <name>S-adenosyl-L-methionine</name>
        <dbReference type="ChEBI" id="CHEBI:59789"/>
    </ligand>
</feature>
<feature type="binding site" evidence="2">
    <location>
        <position position="290"/>
    </location>
    <ligand>
        <name>S-adenosyl-L-methionine</name>
        <dbReference type="ChEBI" id="CHEBI:59789"/>
    </ligand>
</feature>
<feature type="binding site" evidence="2">
    <location>
        <position position="338"/>
    </location>
    <ligand>
        <name>S-adenosyl-L-methionine</name>
        <dbReference type="ChEBI" id="CHEBI:59789"/>
    </ligand>
</feature>
<keyword id="KW-0004">4Fe-4S</keyword>
<keyword id="KW-0408">Iron</keyword>
<keyword id="KW-0411">Iron-sulfur</keyword>
<keyword id="KW-0479">Metal-binding</keyword>
<keyword id="KW-0489">Methyltransferase</keyword>
<keyword id="KW-0949">S-adenosyl-L-methionine</keyword>
<keyword id="KW-0808">Transferase</keyword>
<reference key="1">
    <citation type="journal article" date="2000" name="DNA Res.">
        <title>Complete genome structure of the nitrogen-fixing symbiotic bacterium Mesorhizobium loti.</title>
        <authorList>
            <person name="Kaneko T."/>
            <person name="Nakamura Y."/>
            <person name="Sato S."/>
            <person name="Asamizu E."/>
            <person name="Kato T."/>
            <person name="Sasamoto S."/>
            <person name="Watanabe A."/>
            <person name="Idesawa K."/>
            <person name="Ishikawa A."/>
            <person name="Kawashima K."/>
            <person name="Kimura T."/>
            <person name="Kishida Y."/>
            <person name="Kiyokawa C."/>
            <person name="Kohara M."/>
            <person name="Matsumoto M."/>
            <person name="Matsuno A."/>
            <person name="Mochizuki Y."/>
            <person name="Nakayama S."/>
            <person name="Nakazaki N."/>
            <person name="Shimpo S."/>
            <person name="Sugimoto M."/>
            <person name="Takeuchi C."/>
            <person name="Yamada M."/>
            <person name="Tabata S."/>
        </authorList>
    </citation>
    <scope>NUCLEOTIDE SEQUENCE [LARGE SCALE GENOMIC DNA]</scope>
    <source>
        <strain>LMG 29417 / CECT 9101 / MAFF 303099</strain>
    </source>
</reference>
<evidence type="ECO:0000250" key="1"/>
<evidence type="ECO:0000255" key="2">
    <source>
        <dbReference type="PROSITE-ProRule" id="PRU01024"/>
    </source>
</evidence>
<name>Y7480_RHILO</name>
<dbReference type="EC" id="2.1.1.-"/>
<dbReference type="EMBL" id="BA000012">
    <property type="protein sequence ID" value="BAB53574.1"/>
    <property type="molecule type" value="Genomic_DNA"/>
</dbReference>
<dbReference type="RefSeq" id="WP_010914881.1">
    <property type="nucleotide sequence ID" value="NC_002678.2"/>
</dbReference>
<dbReference type="SMR" id="Q985X9"/>
<dbReference type="KEGG" id="mlo:mlr7480"/>
<dbReference type="PATRIC" id="fig|266835.9.peg.5976"/>
<dbReference type="eggNOG" id="COG2265">
    <property type="taxonomic scope" value="Bacteria"/>
</dbReference>
<dbReference type="HOGENOM" id="CLU_014689_8_0_5"/>
<dbReference type="Proteomes" id="UP000000552">
    <property type="component" value="Chromosome"/>
</dbReference>
<dbReference type="GO" id="GO:0051539">
    <property type="term" value="F:4 iron, 4 sulfur cluster binding"/>
    <property type="evidence" value="ECO:0007669"/>
    <property type="project" value="UniProtKB-KW"/>
</dbReference>
<dbReference type="GO" id="GO:0046872">
    <property type="term" value="F:metal ion binding"/>
    <property type="evidence" value="ECO:0007669"/>
    <property type="project" value="UniProtKB-KW"/>
</dbReference>
<dbReference type="GO" id="GO:0070041">
    <property type="term" value="F:rRNA (uridine-C5-)-methyltransferase activity"/>
    <property type="evidence" value="ECO:0007669"/>
    <property type="project" value="TreeGrafter"/>
</dbReference>
<dbReference type="GO" id="GO:0070475">
    <property type="term" value="P:rRNA base methylation"/>
    <property type="evidence" value="ECO:0007669"/>
    <property type="project" value="TreeGrafter"/>
</dbReference>
<dbReference type="CDD" id="cd02440">
    <property type="entry name" value="AdoMet_MTases"/>
    <property type="match status" value="1"/>
</dbReference>
<dbReference type="Gene3D" id="2.40.50.1070">
    <property type="match status" value="1"/>
</dbReference>
<dbReference type="Gene3D" id="2.40.50.140">
    <property type="entry name" value="Nucleic acid-binding proteins"/>
    <property type="match status" value="1"/>
</dbReference>
<dbReference type="Gene3D" id="3.40.50.150">
    <property type="entry name" value="Vaccinia Virus protein VP39"/>
    <property type="match status" value="1"/>
</dbReference>
<dbReference type="InterPro" id="IPR030390">
    <property type="entry name" value="MeTrfase_TrmA_AS"/>
</dbReference>
<dbReference type="InterPro" id="IPR012340">
    <property type="entry name" value="NA-bd_OB-fold"/>
</dbReference>
<dbReference type="InterPro" id="IPR029063">
    <property type="entry name" value="SAM-dependent_MTases_sf"/>
</dbReference>
<dbReference type="InterPro" id="IPR010280">
    <property type="entry name" value="U5_MeTrfase_fam"/>
</dbReference>
<dbReference type="PANTHER" id="PTHR11061:SF49">
    <property type="entry name" value="23S RRNA (URACIL(1939)-C(5))-METHYLTRANSFERASE RLMD"/>
    <property type="match status" value="1"/>
</dbReference>
<dbReference type="PANTHER" id="PTHR11061">
    <property type="entry name" value="RNA M5U METHYLTRANSFERASE"/>
    <property type="match status" value="1"/>
</dbReference>
<dbReference type="Pfam" id="PF05958">
    <property type="entry name" value="tRNA_U5-meth_tr"/>
    <property type="match status" value="1"/>
</dbReference>
<dbReference type="SUPFAM" id="SSF50249">
    <property type="entry name" value="Nucleic acid-binding proteins"/>
    <property type="match status" value="1"/>
</dbReference>
<dbReference type="SUPFAM" id="SSF53335">
    <property type="entry name" value="S-adenosyl-L-methionine-dependent methyltransferases"/>
    <property type="match status" value="1"/>
</dbReference>
<dbReference type="PROSITE" id="PS51687">
    <property type="entry name" value="SAM_MT_RNA_M5U"/>
    <property type="match status" value="1"/>
</dbReference>
<dbReference type="PROSITE" id="PS01230">
    <property type="entry name" value="TRMA_1"/>
    <property type="match status" value="1"/>
</dbReference>
<organism>
    <name type="scientific">Mesorhizobium japonicum (strain LMG 29417 / CECT 9101 / MAFF 303099)</name>
    <name type="common">Mesorhizobium loti (strain MAFF 303099)</name>
    <dbReference type="NCBI Taxonomy" id="266835"/>
    <lineage>
        <taxon>Bacteria</taxon>
        <taxon>Pseudomonadati</taxon>
        <taxon>Pseudomonadota</taxon>
        <taxon>Alphaproteobacteria</taxon>
        <taxon>Hyphomicrobiales</taxon>
        <taxon>Phyllobacteriaceae</taxon>
        <taxon>Mesorhizobium</taxon>
    </lineage>
</organism>
<sequence>MSARFTVKKLGAQGDGIAETESGDLFIPFTLPGESVTAARERDRAALMAVLEASLLRIEPACRHFTECGGCALQHFEAEAYRQWKRDKVVHALKGIDCSIDELVACAPHTRRRVVLAARRSETGMLLGFNRHLSPEIISISECPISLPEIVAALDRLRALADLICATTKSFRMAVTVTGSGLDVAVYESGKLGEHQRRIASNFVLAQGFARLSIDDEIIIEPRKPVVMFGSVAVAVPPGAFLQATEAAEQAMAEIVGTHLKRAKKVADLFAGCGSFALRLAAKSEVHAVEGDAAALSALDRGARFATGLKRVTGERRDLFRRPLTFKELNTFDGLVFDPPRAGAEDQSKQIARSDVPFVAAVSCNPVTLARDLRILIDGGYQVKSVTPIDQFLWSSHVEAVALLDKPRRRRG</sequence>
<gene>
    <name type="ordered locus">mlr7480</name>
</gene>
<protein>
    <recommendedName>
        <fullName>Uncharacterized RNA methyltransferase mlr7480</fullName>
        <ecNumber>2.1.1.-</ecNumber>
    </recommendedName>
</protein>
<comment type="similarity">
    <text evidence="2">Belongs to the class I-like SAM-binding methyltransferase superfamily. RNA M5U methyltransferase family.</text>
</comment>
<proteinExistence type="inferred from homology"/>
<accession>Q985X9</accession>